<name>Y5418_PSEFS</name>
<evidence type="ECO:0000255" key="1">
    <source>
        <dbReference type="HAMAP-Rule" id="MF_00659"/>
    </source>
</evidence>
<organism>
    <name type="scientific">Pseudomonas fluorescens (strain SBW25)</name>
    <dbReference type="NCBI Taxonomy" id="216595"/>
    <lineage>
        <taxon>Bacteria</taxon>
        <taxon>Pseudomonadati</taxon>
        <taxon>Pseudomonadota</taxon>
        <taxon>Gammaproteobacteria</taxon>
        <taxon>Pseudomonadales</taxon>
        <taxon>Pseudomonadaceae</taxon>
        <taxon>Pseudomonas</taxon>
    </lineage>
</organism>
<proteinExistence type="inferred from homology"/>
<dbReference type="EMBL" id="AM181176">
    <property type="protein sequence ID" value="CAY52592.1"/>
    <property type="molecule type" value="Genomic_DNA"/>
</dbReference>
<dbReference type="RefSeq" id="WP_015886061.1">
    <property type="nucleotide sequence ID" value="NC_012660.1"/>
</dbReference>
<dbReference type="SMR" id="C3K2M0"/>
<dbReference type="STRING" id="294.SRM1_05040"/>
<dbReference type="eggNOG" id="COG2921">
    <property type="taxonomic scope" value="Bacteria"/>
</dbReference>
<dbReference type="HOGENOM" id="CLU_161438_1_0_6"/>
<dbReference type="OrthoDB" id="9793424at2"/>
<dbReference type="GO" id="GO:0005829">
    <property type="term" value="C:cytosol"/>
    <property type="evidence" value="ECO:0007669"/>
    <property type="project" value="TreeGrafter"/>
</dbReference>
<dbReference type="Gene3D" id="3.30.70.260">
    <property type="match status" value="1"/>
</dbReference>
<dbReference type="HAMAP" id="MF_00659">
    <property type="entry name" value="UPF0250"/>
    <property type="match status" value="1"/>
</dbReference>
<dbReference type="InterPro" id="IPR007454">
    <property type="entry name" value="UPF0250_YbeD-like"/>
</dbReference>
<dbReference type="InterPro" id="IPR027471">
    <property type="entry name" value="YbeD-like_sf"/>
</dbReference>
<dbReference type="NCBIfam" id="NF001486">
    <property type="entry name" value="PRK00341.1"/>
    <property type="match status" value="1"/>
</dbReference>
<dbReference type="PANTHER" id="PTHR38036">
    <property type="entry name" value="UPF0250 PROTEIN YBED"/>
    <property type="match status" value="1"/>
</dbReference>
<dbReference type="PANTHER" id="PTHR38036:SF1">
    <property type="entry name" value="UPF0250 PROTEIN YBED"/>
    <property type="match status" value="1"/>
</dbReference>
<dbReference type="Pfam" id="PF04359">
    <property type="entry name" value="DUF493"/>
    <property type="match status" value="1"/>
</dbReference>
<dbReference type="SUPFAM" id="SSF117991">
    <property type="entry name" value="YbeD/HP0495-like"/>
    <property type="match status" value="1"/>
</dbReference>
<comment type="similarity">
    <text evidence="1">Belongs to the UPF0250 family.</text>
</comment>
<reference key="1">
    <citation type="journal article" date="2009" name="Genome Biol.">
        <title>Genomic and genetic analyses of diversity and plant interactions of Pseudomonas fluorescens.</title>
        <authorList>
            <person name="Silby M.W."/>
            <person name="Cerdeno-Tarraga A.M."/>
            <person name="Vernikos G.S."/>
            <person name="Giddens S.R."/>
            <person name="Jackson R.W."/>
            <person name="Preston G.M."/>
            <person name="Zhang X.-X."/>
            <person name="Moon C.D."/>
            <person name="Gehrig S.M."/>
            <person name="Godfrey S.A.C."/>
            <person name="Knight C.G."/>
            <person name="Malone J.G."/>
            <person name="Robinson Z."/>
            <person name="Spiers A.J."/>
            <person name="Harris S."/>
            <person name="Challis G.L."/>
            <person name="Yaxley A.M."/>
            <person name="Harris D."/>
            <person name="Seeger K."/>
            <person name="Murphy L."/>
            <person name="Rutter S."/>
            <person name="Squares R."/>
            <person name="Quail M.A."/>
            <person name="Saunders E."/>
            <person name="Mavromatis K."/>
            <person name="Brettin T.S."/>
            <person name="Bentley S.D."/>
            <person name="Hothersall J."/>
            <person name="Stephens E."/>
            <person name="Thomas C.M."/>
            <person name="Parkhill J."/>
            <person name="Levy S.B."/>
            <person name="Rainey P.B."/>
            <person name="Thomson N.R."/>
        </authorList>
    </citation>
    <scope>NUCLEOTIDE SEQUENCE [LARGE SCALE GENOMIC DNA]</scope>
    <source>
        <strain>SBW25</strain>
    </source>
</reference>
<gene>
    <name type="ordered locus">PFLU_5418</name>
</gene>
<feature type="chain" id="PRO_1000212473" description="UPF0250 protein PFLU_5418">
    <location>
        <begin position="1"/>
        <end position="91"/>
    </location>
</feature>
<sequence length="91" mass="10312">MTDKEVKAPKIEFPVVDYPIKVISDTGVGRKDLILEIVRKHATINDQRVDERSSSTGKYTTIQLHIVATDQDQLYNINSELRATGFVHMVL</sequence>
<accession>C3K2M0</accession>
<protein>
    <recommendedName>
        <fullName evidence="1">UPF0250 protein PFLU_5418</fullName>
    </recommendedName>
</protein>